<protein>
    <recommendedName>
        <fullName evidence="5">Potassium channel toxin alpha-KTx 26.2</fullName>
    </recommendedName>
    <alternativeName>
        <fullName evidence="4">Neurotoxin KTx13</fullName>
    </alternativeName>
</protein>
<name>KA262_LYCMC</name>
<organism>
    <name type="scientific">Lychas mucronatus</name>
    <name type="common">Chinese swimming scorpion</name>
    <dbReference type="NCBI Taxonomy" id="172552"/>
    <lineage>
        <taxon>Eukaryota</taxon>
        <taxon>Metazoa</taxon>
        <taxon>Ecdysozoa</taxon>
        <taxon>Arthropoda</taxon>
        <taxon>Chelicerata</taxon>
        <taxon>Arachnida</taxon>
        <taxon>Scorpiones</taxon>
        <taxon>Buthida</taxon>
        <taxon>Buthoidea</taxon>
        <taxon>Buthidae</taxon>
        <taxon>Lychas</taxon>
    </lineage>
</organism>
<evidence type="ECO:0000250" key="1"/>
<evidence type="ECO:0000250" key="2">
    <source>
        <dbReference type="UniProtKB" id="P0DL65"/>
    </source>
</evidence>
<evidence type="ECO:0000255" key="3"/>
<evidence type="ECO:0000303" key="4">
    <source>
    </source>
</evidence>
<evidence type="ECO:0000305" key="5"/>
<evidence type="ECO:0000305" key="6">
    <source>
    </source>
</evidence>
<dbReference type="EMBL" id="EU163859">
    <property type="protein sequence ID" value="ABY26668.1"/>
    <property type="molecule type" value="mRNA"/>
</dbReference>
<dbReference type="SMR" id="D9U2B2"/>
<dbReference type="GO" id="GO:0005576">
    <property type="term" value="C:extracellular region"/>
    <property type="evidence" value="ECO:0007669"/>
    <property type="project" value="UniProtKB-SubCell"/>
</dbReference>
<dbReference type="GO" id="GO:0015459">
    <property type="term" value="F:potassium channel regulator activity"/>
    <property type="evidence" value="ECO:0007669"/>
    <property type="project" value="UniProtKB-KW"/>
</dbReference>
<dbReference type="GO" id="GO:0090729">
    <property type="term" value="F:toxin activity"/>
    <property type="evidence" value="ECO:0007669"/>
    <property type="project" value="UniProtKB-KW"/>
</dbReference>
<dbReference type="InterPro" id="IPR036574">
    <property type="entry name" value="Scorpion_toxin-like_sf"/>
</dbReference>
<dbReference type="SUPFAM" id="SSF57095">
    <property type="entry name" value="Scorpion toxin-like"/>
    <property type="match status" value="1"/>
</dbReference>
<comment type="function">
    <text evidence="1">Inhibits voltage-gated potassium channels.</text>
</comment>
<comment type="subcellular location">
    <subcellularLocation>
        <location evidence="1">Secreted</location>
    </subcellularLocation>
</comment>
<comment type="tissue specificity">
    <text evidence="6">Expressed by the venom gland.</text>
</comment>
<comment type="domain">
    <text evidence="5">Has the structural arrangement of an alpha-helix connected to antiparallel beta-sheets by disulfide bonds (CS-alpha/beta).</text>
</comment>
<comment type="similarity">
    <text evidence="5">Belongs to the short scorpion toxin superfamily. Potassium channel inhibitor family. Alpha-KTx 26 subfamily.</text>
</comment>
<reference key="1">
    <citation type="journal article" date="2010" name="BMC Genomics">
        <title>Comparative venom gland transcriptome analysis of the scorpion Lychas mucronatus reveals intraspecific toxic gene diversity and new venomous components.</title>
        <authorList>
            <person name="Zhao R."/>
            <person name="Ma Y."/>
            <person name="He Y."/>
            <person name="Di Z."/>
            <person name="Wu Y.-L."/>
            <person name="Cao Z.-J."/>
            <person name="Li W.-X."/>
        </authorList>
    </citation>
    <scope>NUCLEOTIDE SEQUENCE [MRNA]</scope>
    <source>
        <strain>Hainan</strain>
        <tissue>Venom gland</tissue>
    </source>
</reference>
<proteinExistence type="inferred from homology"/>
<keyword id="KW-1015">Disulfide bond</keyword>
<keyword id="KW-0872">Ion channel impairing toxin</keyword>
<keyword id="KW-0528">Neurotoxin</keyword>
<keyword id="KW-0632">Potassium channel impairing toxin</keyword>
<keyword id="KW-0964">Secreted</keyword>
<keyword id="KW-0732">Signal</keyword>
<keyword id="KW-0800">Toxin</keyword>
<sequence>MKTIFVVILVLFVLSAMLASSPDTTAEAAGCRGNCVTICRDKGKVGGKCYNGKCFCFN</sequence>
<feature type="signal peptide" evidence="3">
    <location>
        <begin position="1"/>
        <end position="19"/>
    </location>
</feature>
<feature type="chain" id="PRO_0000403832" description="Potassium channel toxin alpha-KTx 26.2">
    <location>
        <begin position="20"/>
        <end position="58"/>
    </location>
</feature>
<feature type="site" description="Basic residue of the functional dyad" evidence="5">
    <location>
        <position position="48"/>
    </location>
</feature>
<feature type="site" description="Aromatic residue of the functional dyad" evidence="5">
    <location>
        <position position="57"/>
    </location>
</feature>
<feature type="disulfide bond" evidence="2">
    <location>
        <begin position="31"/>
        <end position="49"/>
    </location>
</feature>
<feature type="disulfide bond" evidence="2">
    <location>
        <begin position="35"/>
        <end position="54"/>
    </location>
</feature>
<feature type="disulfide bond" evidence="2">
    <location>
        <begin position="39"/>
        <end position="56"/>
    </location>
</feature>
<accession>D9U2B2</accession>